<proteinExistence type="evidence at protein level"/>
<protein>
    <recommendedName>
        <fullName evidence="3">Chassatide C9</fullName>
    </recommendedName>
    <alternativeName>
        <fullName evidence="3">Cyclotide chaC9</fullName>
    </alternativeName>
</protein>
<accession>C0HKH0</accession>
<evidence type="ECO:0000255" key="1">
    <source>
        <dbReference type="PROSITE-ProRule" id="PRU00395"/>
    </source>
</evidence>
<evidence type="ECO:0000269" key="2">
    <source>
    </source>
</evidence>
<evidence type="ECO:0000303" key="3">
    <source>
    </source>
</evidence>
<evidence type="ECO:0000305" key="4"/>
<dbReference type="SMR" id="C0HKH0"/>
<dbReference type="GO" id="GO:0006952">
    <property type="term" value="P:defense response"/>
    <property type="evidence" value="ECO:0007669"/>
    <property type="project" value="UniProtKB-KW"/>
</dbReference>
<dbReference type="InterPro" id="IPR005535">
    <property type="entry name" value="Cyclotide"/>
</dbReference>
<dbReference type="InterPro" id="IPR012323">
    <property type="entry name" value="Cyclotide_bracelet_CS"/>
</dbReference>
<dbReference type="InterPro" id="IPR036146">
    <property type="entry name" value="Cyclotide_sf"/>
</dbReference>
<dbReference type="Pfam" id="PF03784">
    <property type="entry name" value="Cyclotide"/>
    <property type="match status" value="1"/>
</dbReference>
<dbReference type="PIRSF" id="PIRSF037891">
    <property type="entry name" value="Cycloviolacin"/>
    <property type="match status" value="1"/>
</dbReference>
<dbReference type="SUPFAM" id="SSF57038">
    <property type="entry name" value="Cyclotides"/>
    <property type="match status" value="1"/>
</dbReference>
<dbReference type="PROSITE" id="PS51052">
    <property type="entry name" value="CYCLOTIDE"/>
    <property type="match status" value="1"/>
</dbReference>
<dbReference type="PROSITE" id="PS60008">
    <property type="entry name" value="CYCLOTIDE_BRACELET"/>
    <property type="match status" value="1"/>
</dbReference>
<feature type="peptide" id="PRO_0000440238" description="Chassatide C9" evidence="2">
    <location>
        <begin position="1"/>
        <end position="30"/>
    </location>
</feature>
<feature type="disulfide bond" evidence="1">
    <location>
        <begin position="4"/>
        <end position="20"/>
    </location>
</feature>
<feature type="disulfide bond" evidence="1">
    <location>
        <begin position="8"/>
        <end position="22"/>
    </location>
</feature>
<feature type="disulfide bond" evidence="1">
    <location>
        <begin position="13"/>
        <end position="27"/>
    </location>
</feature>
<feature type="cross-link" description="Cyclopeptide (Gly-Asn)" evidence="2">
    <location>
        <begin position="1"/>
        <end position="30"/>
    </location>
</feature>
<reference evidence="4" key="1">
    <citation type="journal article" date="2012" name="J. Biol. Chem.">
        <title>Novel Cyclotides and Uncyclotides with Highly Shortened Precursors from Chassalia chartacea and Effects of Methionine Oxidation on Bioactivities.</title>
        <authorList>
            <person name="Nguyen G.K."/>
            <person name="Lim W.H."/>
            <person name="Nguyen P.Q."/>
            <person name="Tam J.P."/>
        </authorList>
    </citation>
    <scope>PROTEIN SEQUENCE</scope>
    <scope>MASS SPECTROMETRY</scope>
    <scope>IDENTIFICATION BY MASS SPECTROMETRY</scope>
</reference>
<comment type="function">
    <text evidence="1">Probably participates in a plant defense mechanism.</text>
</comment>
<comment type="domain">
    <text evidence="4">The presence of a 'disulfide through disulfide knot' structurally defines this protein as a knottin.</text>
</comment>
<comment type="PTM">
    <text evidence="1 2">This is a cyclic peptide.</text>
</comment>
<comment type="mass spectrometry"/>
<comment type="similarity">
    <text evidence="1">Belongs to the cyclotide family. Bracelet subfamily.</text>
</comment>
<comment type="caution">
    <text evidence="4">This peptide is cyclic. The start position was chosen by similarity to chassatide C8 for which the DNA sequence is known.</text>
</comment>
<organism evidence="3">
    <name type="scientific">Chassalia chartacea</name>
    <name type="common">Chassalia curviflora</name>
    <dbReference type="NCBI Taxonomy" id="510798"/>
    <lineage>
        <taxon>Eukaryota</taxon>
        <taxon>Viridiplantae</taxon>
        <taxon>Streptophyta</taxon>
        <taxon>Embryophyta</taxon>
        <taxon>Tracheophyta</taxon>
        <taxon>Spermatophyta</taxon>
        <taxon>Magnoliopsida</taxon>
        <taxon>eudicotyledons</taxon>
        <taxon>Gunneridae</taxon>
        <taxon>Pentapetalae</taxon>
        <taxon>asterids</taxon>
        <taxon>lamiids</taxon>
        <taxon>Gentianales</taxon>
        <taxon>Rubiaceae</taxon>
        <taxon>Rubioideae</taxon>
        <taxon>Palicoureeae</taxon>
        <taxon>Chassalia</taxon>
    </lineage>
</organism>
<keyword id="KW-0903">Direct protein sequencing</keyword>
<keyword id="KW-1015">Disulfide bond</keyword>
<keyword id="KW-0960">Knottin</keyword>
<keyword id="KW-0611">Plant defense</keyword>
<sequence>GIPCGESCVFIPCVTTVIGCSCKDKVCYNN</sequence>
<name>CYC9_CHACT</name>